<geneLocation type="chloroplast"/>
<name>PSBB_PINKO</name>
<comment type="function">
    <text evidence="1">One of the components of the core complex of photosystem II (PSII). It binds chlorophyll and helps catalyze the primary light-induced photochemical processes of PSII. PSII is a light-driven water:plastoquinone oxidoreductase, using light energy to abstract electrons from H(2)O, generating O(2) and a proton gradient subsequently used for ATP formation.</text>
</comment>
<comment type="cofactor">
    <text evidence="1">Binds multiple chlorophylls. PSII binds additional chlorophylls, carotenoids and specific lipids.</text>
</comment>
<comment type="subunit">
    <text evidence="1">PSII is composed of 1 copy each of membrane proteins PsbA, PsbB, PsbC, PsbD, PsbE, PsbF, PsbH, PsbI, PsbJ, PsbK, PsbL, PsbM, PsbT, PsbX, PsbY, PsbZ, Psb30/Ycf12, at least 3 peripheral proteins of the oxygen-evolving complex and a large number of cofactors. It forms dimeric complexes.</text>
</comment>
<comment type="subcellular location">
    <subcellularLocation>
        <location evidence="1">Plastid</location>
        <location evidence="1">Chloroplast thylakoid membrane</location>
        <topology evidence="1">Multi-pass membrane protein</topology>
    </subcellularLocation>
</comment>
<comment type="similarity">
    <text evidence="1">Belongs to the PsbB/PsbC family. PsbB subfamily.</text>
</comment>
<sequence length="508" mass="56362">MGLPWYRVHTVVLNDPGRLISVHIMHTALVAGWAGSMTLYELAVFDPSDPVLDPMWRQGMFVIPFMTRLGIKDSWSGWNITGETVINPGIWSYEGVAGAHIMFSGLMFLAAIWHWVYWDLEIFYDERTGKLCLDLPKVFGIHLFLSGVACFGFGAFHVTGLYGPGIWVSDPYGLTGKIQPVDPAWGAEGFDPFVPGGIASHHIAAGILGILAGLFHLSVRPPQRLYVGLRMGNIETVLSSSIAAVFFAAFIVAGTMWYGSATTPVELFGPTRYQWDQGYFQQEIDRRVRAGLAENLSLSEAWSKIPEKLAFYDYIGNNPAKGGLFRAGAMDNGDGIAVGWLGHPIFKDKEGNELFVRRMPTFFETFPVVLVDKEGIVKADVPFRRAESKYSVEQVGVTVEFYGGGLDRVSFGDPAIVKKYARRAQLGEIFELDRATLKSDGVFRSSPRGWFTFGHATFALLFFSGHIWHGARTLFRDVFAGIDPDLDSRIEFGAFQKLGDPTTKRQVV</sequence>
<reference key="1">
    <citation type="submission" date="2003-02" db="EMBL/GenBank/DDBJ databases">
        <title>Complete nucleotide sequence of Pinus koraiensis.</title>
        <authorList>
            <person name="Noh E.W."/>
            <person name="Lee J.S."/>
            <person name="Choi Y.I."/>
            <person name="Han M.S."/>
            <person name="Yi Y.S."/>
            <person name="Han S.U."/>
        </authorList>
    </citation>
    <scope>NUCLEOTIDE SEQUENCE [LARGE SCALE GENOMIC DNA]</scope>
    <source>
        <strain>KangWon16</strain>
    </source>
</reference>
<gene>
    <name evidence="1" type="primary">psbB</name>
</gene>
<accession>Q85X12</accession>
<organism>
    <name type="scientific">Pinus koraiensis</name>
    <name type="common">Korean pine</name>
    <dbReference type="NCBI Taxonomy" id="88728"/>
    <lineage>
        <taxon>Eukaryota</taxon>
        <taxon>Viridiplantae</taxon>
        <taxon>Streptophyta</taxon>
        <taxon>Embryophyta</taxon>
        <taxon>Tracheophyta</taxon>
        <taxon>Spermatophyta</taxon>
        <taxon>Pinopsida</taxon>
        <taxon>Pinidae</taxon>
        <taxon>Conifers I</taxon>
        <taxon>Pinales</taxon>
        <taxon>Pinaceae</taxon>
        <taxon>Pinus</taxon>
        <taxon>Pinus subgen. Strobus</taxon>
    </lineage>
</organism>
<keyword id="KW-0148">Chlorophyll</keyword>
<keyword id="KW-0150">Chloroplast</keyword>
<keyword id="KW-0157">Chromophore</keyword>
<keyword id="KW-0472">Membrane</keyword>
<keyword id="KW-0602">Photosynthesis</keyword>
<keyword id="KW-0604">Photosystem II</keyword>
<keyword id="KW-0934">Plastid</keyword>
<keyword id="KW-0793">Thylakoid</keyword>
<keyword id="KW-0812">Transmembrane</keyword>
<keyword id="KW-1133">Transmembrane helix</keyword>
<evidence type="ECO:0000255" key="1">
    <source>
        <dbReference type="HAMAP-Rule" id="MF_01495"/>
    </source>
</evidence>
<protein>
    <recommendedName>
        <fullName evidence="1">Photosystem II CP47 reaction center protein</fullName>
    </recommendedName>
    <alternativeName>
        <fullName evidence="1">PSII 47 kDa protein</fullName>
    </alternativeName>
    <alternativeName>
        <fullName evidence="1">Protein CP-47</fullName>
    </alternativeName>
</protein>
<feature type="chain" id="PRO_0000277437" description="Photosystem II CP47 reaction center protein">
    <location>
        <begin position="1"/>
        <end position="508"/>
    </location>
</feature>
<feature type="transmembrane region" description="Helical" evidence="1">
    <location>
        <begin position="21"/>
        <end position="36"/>
    </location>
</feature>
<feature type="transmembrane region" description="Helical" evidence="1">
    <location>
        <begin position="101"/>
        <end position="115"/>
    </location>
</feature>
<feature type="transmembrane region" description="Helical" evidence="1">
    <location>
        <begin position="140"/>
        <end position="156"/>
    </location>
</feature>
<feature type="transmembrane region" description="Helical" evidence="1">
    <location>
        <begin position="203"/>
        <end position="218"/>
    </location>
</feature>
<feature type="transmembrane region" description="Helical" evidence="1">
    <location>
        <begin position="237"/>
        <end position="252"/>
    </location>
</feature>
<feature type="transmembrane region" description="Helical" evidence="1">
    <location>
        <begin position="457"/>
        <end position="472"/>
    </location>
</feature>
<dbReference type="EMBL" id="AY228468">
    <property type="protein sequence ID" value="AAO74054.1"/>
    <property type="molecule type" value="Genomic_DNA"/>
</dbReference>
<dbReference type="RefSeq" id="NP_817206.1">
    <property type="nucleotide sequence ID" value="NC_004677.2"/>
</dbReference>
<dbReference type="SMR" id="Q85X12"/>
<dbReference type="GeneID" id="806924"/>
<dbReference type="GO" id="GO:0009535">
    <property type="term" value="C:chloroplast thylakoid membrane"/>
    <property type="evidence" value="ECO:0007669"/>
    <property type="project" value="UniProtKB-SubCell"/>
</dbReference>
<dbReference type="GO" id="GO:0009523">
    <property type="term" value="C:photosystem II"/>
    <property type="evidence" value="ECO:0007669"/>
    <property type="project" value="UniProtKB-KW"/>
</dbReference>
<dbReference type="GO" id="GO:0016168">
    <property type="term" value="F:chlorophyll binding"/>
    <property type="evidence" value="ECO:0007669"/>
    <property type="project" value="UniProtKB-UniRule"/>
</dbReference>
<dbReference type="GO" id="GO:0045156">
    <property type="term" value="F:electron transporter, transferring electrons within the cyclic electron transport pathway of photosynthesis activity"/>
    <property type="evidence" value="ECO:0007669"/>
    <property type="project" value="InterPro"/>
</dbReference>
<dbReference type="GO" id="GO:0009772">
    <property type="term" value="P:photosynthetic electron transport in photosystem II"/>
    <property type="evidence" value="ECO:0007669"/>
    <property type="project" value="InterPro"/>
</dbReference>
<dbReference type="FunFam" id="3.10.680.10:FF:000001">
    <property type="entry name" value="Photosystem II CP47 reaction center protein"/>
    <property type="match status" value="1"/>
</dbReference>
<dbReference type="Gene3D" id="3.10.680.10">
    <property type="entry name" value="Photosystem II CP47 reaction center protein"/>
    <property type="match status" value="1"/>
</dbReference>
<dbReference type="HAMAP" id="MF_01495">
    <property type="entry name" value="PSII_PsbB_CP47"/>
    <property type="match status" value="1"/>
</dbReference>
<dbReference type="InterPro" id="IPR000932">
    <property type="entry name" value="PS_antenna-like"/>
</dbReference>
<dbReference type="InterPro" id="IPR036001">
    <property type="entry name" value="PS_II_antenna-like_sf"/>
</dbReference>
<dbReference type="InterPro" id="IPR017486">
    <property type="entry name" value="PSII_PsbB"/>
</dbReference>
<dbReference type="NCBIfam" id="TIGR03039">
    <property type="entry name" value="PS_II_CP47"/>
    <property type="match status" value="1"/>
</dbReference>
<dbReference type="PANTHER" id="PTHR33180">
    <property type="entry name" value="PHOTOSYSTEM II CP43 REACTION CENTER PROTEIN"/>
    <property type="match status" value="1"/>
</dbReference>
<dbReference type="PANTHER" id="PTHR33180:SF37">
    <property type="entry name" value="PHOTOSYSTEM II CP43 REACTION CENTER PROTEIN"/>
    <property type="match status" value="1"/>
</dbReference>
<dbReference type="Pfam" id="PF00421">
    <property type="entry name" value="PSII"/>
    <property type="match status" value="1"/>
</dbReference>
<dbReference type="SUPFAM" id="SSF161077">
    <property type="entry name" value="Photosystem II antenna protein-like"/>
    <property type="match status" value="1"/>
</dbReference>
<proteinExistence type="inferred from homology"/>